<evidence type="ECO:0000250" key="1"/>
<evidence type="ECO:0000250" key="2">
    <source>
        <dbReference type="UniProtKB" id="Q5XJY4"/>
    </source>
</evidence>
<evidence type="ECO:0000250" key="3">
    <source>
        <dbReference type="UniProtKB" id="Q9H300"/>
    </source>
</evidence>
<evidence type="ECO:0000255" key="4"/>
<evidence type="ECO:0000256" key="5">
    <source>
        <dbReference type="SAM" id="MobiDB-lite"/>
    </source>
</evidence>
<evidence type="ECO:0000312" key="6">
    <source>
        <dbReference type="EMBL" id="AAH91865.1"/>
    </source>
</evidence>
<feature type="transit peptide" description="Mitochondrion" evidence="3">
    <location>
        <begin position="1"/>
        <end position="37"/>
    </location>
</feature>
<feature type="chain" id="PRO_0000259406" description="Presenilin-associated rhomboid-like protein A, mitochondrial">
    <location>
        <begin position="38"/>
        <end position="383"/>
    </location>
</feature>
<feature type="topological domain" description="Mitochondrial matrix" evidence="4">
    <location>
        <begin position="38"/>
        <end position="83"/>
    </location>
</feature>
<feature type="transmembrane region" description="Helical" evidence="4">
    <location>
        <begin position="84"/>
        <end position="104"/>
    </location>
</feature>
<feature type="topological domain" description="Mitochondrial intermembrane" evidence="4">
    <location>
        <begin position="105"/>
        <end position="168"/>
    </location>
</feature>
<feature type="transmembrane region" description="Helical" evidence="4">
    <location>
        <begin position="169"/>
        <end position="189"/>
    </location>
</feature>
<feature type="topological domain" description="Mitochondrial matrix" evidence="4">
    <location>
        <begin position="190"/>
        <end position="219"/>
    </location>
</feature>
<feature type="transmembrane region" description="Helical" evidence="4">
    <location>
        <begin position="220"/>
        <end position="240"/>
    </location>
</feature>
<feature type="topological domain" description="Mitochondrial intermembrane" evidence="4">
    <location>
        <begin position="241"/>
        <end position="245"/>
    </location>
</feature>
<feature type="transmembrane region" description="Helical" evidence="4">
    <location>
        <begin position="246"/>
        <end position="266"/>
    </location>
</feature>
<feature type="topological domain" description="Mitochondrial matrix" evidence="4">
    <location>
        <begin position="267"/>
        <end position="271"/>
    </location>
</feature>
<feature type="transmembrane region" description="Helical" evidence="4">
    <location>
        <begin position="272"/>
        <end position="292"/>
    </location>
</feature>
<feature type="topological domain" description="Mitochondrial intermembrane" evidence="4">
    <location>
        <begin position="293"/>
        <end position="298"/>
    </location>
</feature>
<feature type="transmembrane region" description="Helical" evidence="4">
    <location>
        <begin position="299"/>
        <end position="319"/>
    </location>
</feature>
<feature type="topological domain" description="Mitochondrial matrix" evidence="4">
    <location>
        <begin position="320"/>
        <end position="334"/>
    </location>
</feature>
<feature type="transmembrane region" description="Helical" evidence="4">
    <location>
        <begin position="335"/>
        <end position="355"/>
    </location>
</feature>
<feature type="topological domain" description="Mitochondrial intermembrane" evidence="4">
    <location>
        <begin position="356"/>
        <end position="383"/>
    </location>
</feature>
<feature type="region of interest" description="Disordered" evidence="5">
    <location>
        <begin position="35"/>
        <end position="75"/>
    </location>
</feature>
<feature type="compositionally biased region" description="Basic and acidic residues" evidence="5">
    <location>
        <begin position="39"/>
        <end position="52"/>
    </location>
</feature>
<feature type="compositionally biased region" description="Pro residues" evidence="5">
    <location>
        <begin position="66"/>
        <end position="75"/>
    </location>
</feature>
<feature type="active site" description="Nucleophile" evidence="1">
    <location>
        <position position="278"/>
    </location>
</feature>
<feature type="active site" evidence="1">
    <location>
        <position position="336"/>
    </location>
</feature>
<accession>Q58EK4</accession>
<reference evidence="6" key="1">
    <citation type="submission" date="2005-03" db="EMBL/GenBank/DDBJ databases">
        <authorList>
            <consortium name="NIH - Zebrafish Gene Collection (ZGC) project"/>
        </authorList>
    </citation>
    <scope>NUCLEOTIDE SEQUENCE [LARGE SCALE MRNA]</scope>
    <source>
        <tissue evidence="6">Embryo</tissue>
    </source>
</reference>
<dbReference type="EC" id="3.4.21.105" evidence="3"/>
<dbReference type="EMBL" id="BC091865">
    <property type="protein sequence ID" value="AAH91865.1"/>
    <property type="molecule type" value="mRNA"/>
</dbReference>
<dbReference type="RefSeq" id="NP_001014320.1">
    <property type="nucleotide sequence ID" value="NM_001014298.1"/>
</dbReference>
<dbReference type="SMR" id="Q58EK4"/>
<dbReference type="FunCoup" id="Q58EK4">
    <property type="interactions" value="2221"/>
</dbReference>
<dbReference type="STRING" id="7955.ENSDARP00000057438"/>
<dbReference type="PaxDb" id="7955-ENSDARP00000057438"/>
<dbReference type="GeneID" id="541485"/>
<dbReference type="KEGG" id="dre:541485"/>
<dbReference type="AGR" id="ZFIN:ZDB-GENE-050327-8"/>
<dbReference type="CTD" id="541485"/>
<dbReference type="ZFIN" id="ZDB-GENE-050327-8">
    <property type="gene designation" value="parla"/>
</dbReference>
<dbReference type="eggNOG" id="KOG2980">
    <property type="taxonomic scope" value="Eukaryota"/>
</dbReference>
<dbReference type="InParanoid" id="Q58EK4"/>
<dbReference type="OrthoDB" id="10260614at2759"/>
<dbReference type="PhylomeDB" id="Q58EK4"/>
<dbReference type="PRO" id="PR:Q58EK4"/>
<dbReference type="Proteomes" id="UP000000437">
    <property type="component" value="Chromosome 2"/>
</dbReference>
<dbReference type="GO" id="GO:0005743">
    <property type="term" value="C:mitochondrial inner membrane"/>
    <property type="evidence" value="ECO:0007669"/>
    <property type="project" value="UniProtKB-SubCell"/>
</dbReference>
<dbReference type="GO" id="GO:0004252">
    <property type="term" value="F:serine-type endopeptidase activity"/>
    <property type="evidence" value="ECO:0000318"/>
    <property type="project" value="GO_Central"/>
</dbReference>
<dbReference type="GO" id="GO:0006465">
    <property type="term" value="P:signal peptide processing"/>
    <property type="evidence" value="ECO:0000318"/>
    <property type="project" value="GO_Central"/>
</dbReference>
<dbReference type="FunFam" id="1.20.1540.10:FF:000005">
    <property type="entry name" value="Presenilins-associated rhomboid-like protein, mitochondrial"/>
    <property type="match status" value="1"/>
</dbReference>
<dbReference type="Gene3D" id="1.20.1540.10">
    <property type="entry name" value="Rhomboid-like"/>
    <property type="match status" value="1"/>
</dbReference>
<dbReference type="InterPro" id="IPR022764">
    <property type="entry name" value="Peptidase_S54_rhomboid_dom"/>
</dbReference>
<dbReference type="InterPro" id="IPR035952">
    <property type="entry name" value="Rhomboid-like_sf"/>
</dbReference>
<dbReference type="InterPro" id="IPR050925">
    <property type="entry name" value="Rhomboid_protease_S54"/>
</dbReference>
<dbReference type="PANTHER" id="PTHR43731:SF28">
    <property type="entry name" value="PRESENILIN-ASSOCIATED RHOMBOID-LIKE PROTEIN A, MITOCHONDRIAL"/>
    <property type="match status" value="1"/>
</dbReference>
<dbReference type="PANTHER" id="PTHR43731">
    <property type="entry name" value="RHOMBOID PROTEASE"/>
    <property type="match status" value="1"/>
</dbReference>
<dbReference type="Pfam" id="PF01694">
    <property type="entry name" value="Rhomboid"/>
    <property type="match status" value="1"/>
</dbReference>
<dbReference type="SUPFAM" id="SSF144091">
    <property type="entry name" value="Rhomboid-like"/>
    <property type="match status" value="1"/>
</dbReference>
<protein>
    <recommendedName>
        <fullName>Presenilin-associated rhomboid-like protein A, mitochondrial</fullName>
        <ecNumber evidence="3">3.4.21.105</ecNumber>
    </recommendedName>
</protein>
<proteinExistence type="evidence at transcript level"/>
<organism>
    <name type="scientific">Danio rerio</name>
    <name type="common">Zebrafish</name>
    <name type="synonym">Brachydanio rerio</name>
    <dbReference type="NCBI Taxonomy" id="7955"/>
    <lineage>
        <taxon>Eukaryota</taxon>
        <taxon>Metazoa</taxon>
        <taxon>Chordata</taxon>
        <taxon>Craniata</taxon>
        <taxon>Vertebrata</taxon>
        <taxon>Euteleostomi</taxon>
        <taxon>Actinopterygii</taxon>
        <taxon>Neopterygii</taxon>
        <taxon>Teleostei</taxon>
        <taxon>Ostariophysi</taxon>
        <taxon>Cypriniformes</taxon>
        <taxon>Danionidae</taxon>
        <taxon>Danioninae</taxon>
        <taxon>Danio</taxon>
    </lineage>
</organism>
<name>PARLA_DANRE</name>
<comment type="function">
    <text evidence="2">Required for the control of apoptosis during postnatal growth. Essential for proteolytic processing of an antiapoptotic form of opa1 which prevents the release of mitochondrial cytochrome c in response to intrinsic apoptotic signals.</text>
</comment>
<comment type="catalytic activity">
    <reaction evidence="3">
        <text>Cleaves type-1 transmembrane domains using a catalytic dyad composed of serine and histidine that are contributed by different transmembrane domains.</text>
        <dbReference type="EC" id="3.4.21.105"/>
    </reaction>
</comment>
<comment type="subcellular location">
    <subcellularLocation>
        <location evidence="3">Mitochondrion inner membrane</location>
        <topology evidence="3">Multi-pass membrane protein</topology>
    </subcellularLocation>
</comment>
<comment type="similarity">
    <text evidence="4">Belongs to the peptidase S54 family.</text>
</comment>
<sequence length="383" mass="42409">MAWRSCFMKWTQINSINASSLCPKSTRLNIHPQQRCGFRKTERPSESKKGVQETEAEAGGHNRAVPPKPVPPLPPRRPHQLFRPLVFTVGFTGCSFGAAAILQYESVKSRVQLAIEEAKEEKRDTLLEGHDTTYWHNWWNQLSNFQKQVILLISAVDDFWSGLSEGQKTVTGIIALNTVVLCCWRVPAMQRFLVKYFTSNPASKTRCLPMVLSSFSHYSVIHMVVNMYVLWTFSSSIVSLLGREQFLALYLSGGVISTFVSYVFKTATGRLGPSLGASGSIMTVLAAVCTKIPEAKLGIVLLPVISFSAGNALKALVALDIAGLVLGWRFFDHAAHLGGALFGVWYIGYGHELIWRKREPLIKFWHELRNMSPGRPGPGGGGG</sequence>
<gene>
    <name type="primary">parla</name>
    <name type="ORF">zgc:112986</name>
</gene>
<keyword id="KW-0378">Hydrolase</keyword>
<keyword id="KW-0472">Membrane</keyword>
<keyword id="KW-0496">Mitochondrion</keyword>
<keyword id="KW-0999">Mitochondrion inner membrane</keyword>
<keyword id="KW-0645">Protease</keyword>
<keyword id="KW-1185">Reference proteome</keyword>
<keyword id="KW-0720">Serine protease</keyword>
<keyword id="KW-0809">Transit peptide</keyword>
<keyword id="KW-0812">Transmembrane</keyword>
<keyword id="KW-1133">Transmembrane helix</keyword>